<proteinExistence type="inferred from homology"/>
<accession>Q3A2G3</accession>
<keyword id="KW-0131">Cell cycle</keyword>
<keyword id="KW-0132">Cell division</keyword>
<keyword id="KW-0997">Cell inner membrane</keyword>
<keyword id="KW-1003">Cell membrane</keyword>
<keyword id="KW-0133">Cell shape</keyword>
<keyword id="KW-0961">Cell wall biogenesis/degradation</keyword>
<keyword id="KW-0460">Magnesium</keyword>
<keyword id="KW-0472">Membrane</keyword>
<keyword id="KW-0479">Metal-binding</keyword>
<keyword id="KW-0573">Peptidoglycan synthesis</keyword>
<keyword id="KW-1185">Reference proteome</keyword>
<keyword id="KW-0808">Transferase</keyword>
<keyword id="KW-0812">Transmembrane</keyword>
<keyword id="KW-1133">Transmembrane helix</keyword>
<organism>
    <name type="scientific">Syntrophotalea carbinolica (strain DSM 2380 / NBRC 103641 / GraBd1)</name>
    <name type="common">Pelobacter carbinolicus</name>
    <dbReference type="NCBI Taxonomy" id="338963"/>
    <lineage>
        <taxon>Bacteria</taxon>
        <taxon>Pseudomonadati</taxon>
        <taxon>Thermodesulfobacteriota</taxon>
        <taxon>Desulfuromonadia</taxon>
        <taxon>Desulfuromonadales</taxon>
        <taxon>Syntrophotaleaceae</taxon>
        <taxon>Syntrophotalea</taxon>
    </lineage>
</organism>
<gene>
    <name evidence="1" type="primary">mraY</name>
    <name type="ordered locus">Pcar_2205</name>
</gene>
<comment type="function">
    <text evidence="1">Catalyzes the initial step of the lipid cycle reactions in the biosynthesis of the cell wall peptidoglycan: transfers peptidoglycan precursor phospho-MurNAc-pentapeptide from UDP-MurNAc-pentapeptide onto the lipid carrier undecaprenyl phosphate, yielding undecaprenyl-pyrophosphoryl-MurNAc-pentapeptide, known as lipid I.</text>
</comment>
<comment type="catalytic activity">
    <reaction evidence="1">
        <text>UDP-N-acetyl-alpha-D-muramoyl-L-alanyl-gamma-D-glutamyl-meso-2,6-diaminopimeloyl-D-alanyl-D-alanine + di-trans,octa-cis-undecaprenyl phosphate = di-trans,octa-cis-undecaprenyl diphospho-N-acetyl-alpha-D-muramoyl-L-alanyl-D-glutamyl-meso-2,6-diaminopimeloyl-D-alanyl-D-alanine + UMP</text>
        <dbReference type="Rhea" id="RHEA:28386"/>
        <dbReference type="ChEBI" id="CHEBI:57865"/>
        <dbReference type="ChEBI" id="CHEBI:60392"/>
        <dbReference type="ChEBI" id="CHEBI:61386"/>
        <dbReference type="ChEBI" id="CHEBI:61387"/>
        <dbReference type="EC" id="2.7.8.13"/>
    </reaction>
</comment>
<comment type="cofactor">
    <cofactor evidence="1">
        <name>Mg(2+)</name>
        <dbReference type="ChEBI" id="CHEBI:18420"/>
    </cofactor>
</comment>
<comment type="pathway">
    <text evidence="1">Cell wall biogenesis; peptidoglycan biosynthesis.</text>
</comment>
<comment type="subcellular location">
    <subcellularLocation>
        <location evidence="1">Cell inner membrane</location>
        <topology evidence="1">Multi-pass membrane protein</topology>
    </subcellularLocation>
</comment>
<comment type="similarity">
    <text evidence="1">Belongs to the glycosyltransferase 4 family. MraY subfamily.</text>
</comment>
<reference key="1">
    <citation type="submission" date="2005-10" db="EMBL/GenBank/DDBJ databases">
        <title>Complete sequence of Pelobacter carbinolicus DSM 2380.</title>
        <authorList>
            <person name="Copeland A."/>
            <person name="Lucas S."/>
            <person name="Lapidus A."/>
            <person name="Barry K."/>
            <person name="Detter J.C."/>
            <person name="Glavina T."/>
            <person name="Hammon N."/>
            <person name="Israni S."/>
            <person name="Pitluck S."/>
            <person name="Chertkov O."/>
            <person name="Schmutz J."/>
            <person name="Larimer F."/>
            <person name="Land M."/>
            <person name="Kyrpides N."/>
            <person name="Ivanova N."/>
            <person name="Richardson P."/>
        </authorList>
    </citation>
    <scope>NUCLEOTIDE SEQUENCE [LARGE SCALE GENOMIC DNA]</scope>
    <source>
        <strain>DSM 2380 / NBRC 103641 / GraBd1</strain>
    </source>
</reference>
<evidence type="ECO:0000255" key="1">
    <source>
        <dbReference type="HAMAP-Rule" id="MF_00038"/>
    </source>
</evidence>
<dbReference type="EC" id="2.7.8.13" evidence="1"/>
<dbReference type="EMBL" id="CP000142">
    <property type="protein sequence ID" value="ABA89444.1"/>
    <property type="molecule type" value="Genomic_DNA"/>
</dbReference>
<dbReference type="RefSeq" id="WP_011341959.1">
    <property type="nucleotide sequence ID" value="NC_007498.2"/>
</dbReference>
<dbReference type="SMR" id="Q3A2G3"/>
<dbReference type="STRING" id="338963.Pcar_2205"/>
<dbReference type="KEGG" id="pca:Pcar_2205"/>
<dbReference type="eggNOG" id="COG0472">
    <property type="taxonomic scope" value="Bacteria"/>
</dbReference>
<dbReference type="HOGENOM" id="CLU_023982_0_0_7"/>
<dbReference type="OrthoDB" id="9805475at2"/>
<dbReference type="UniPathway" id="UPA00219"/>
<dbReference type="Proteomes" id="UP000002534">
    <property type="component" value="Chromosome"/>
</dbReference>
<dbReference type="GO" id="GO:0005886">
    <property type="term" value="C:plasma membrane"/>
    <property type="evidence" value="ECO:0007669"/>
    <property type="project" value="UniProtKB-SubCell"/>
</dbReference>
<dbReference type="GO" id="GO:0046872">
    <property type="term" value="F:metal ion binding"/>
    <property type="evidence" value="ECO:0007669"/>
    <property type="project" value="UniProtKB-KW"/>
</dbReference>
<dbReference type="GO" id="GO:0008963">
    <property type="term" value="F:phospho-N-acetylmuramoyl-pentapeptide-transferase activity"/>
    <property type="evidence" value="ECO:0007669"/>
    <property type="project" value="UniProtKB-UniRule"/>
</dbReference>
<dbReference type="GO" id="GO:0051992">
    <property type="term" value="F:UDP-N-acetylmuramoyl-L-alanyl-D-glutamyl-meso-2,6-diaminopimelyl-D-alanyl-D-alanine:undecaprenyl-phosphate transferase activity"/>
    <property type="evidence" value="ECO:0007669"/>
    <property type="project" value="RHEA"/>
</dbReference>
<dbReference type="GO" id="GO:0051301">
    <property type="term" value="P:cell division"/>
    <property type="evidence" value="ECO:0007669"/>
    <property type="project" value="UniProtKB-KW"/>
</dbReference>
<dbReference type="GO" id="GO:0071555">
    <property type="term" value="P:cell wall organization"/>
    <property type="evidence" value="ECO:0007669"/>
    <property type="project" value="UniProtKB-KW"/>
</dbReference>
<dbReference type="GO" id="GO:0009252">
    <property type="term" value="P:peptidoglycan biosynthetic process"/>
    <property type="evidence" value="ECO:0007669"/>
    <property type="project" value="UniProtKB-UniRule"/>
</dbReference>
<dbReference type="GO" id="GO:0008360">
    <property type="term" value="P:regulation of cell shape"/>
    <property type="evidence" value="ECO:0007669"/>
    <property type="project" value="UniProtKB-KW"/>
</dbReference>
<dbReference type="CDD" id="cd06852">
    <property type="entry name" value="GT_MraY"/>
    <property type="match status" value="1"/>
</dbReference>
<dbReference type="HAMAP" id="MF_00038">
    <property type="entry name" value="MraY"/>
    <property type="match status" value="1"/>
</dbReference>
<dbReference type="InterPro" id="IPR000715">
    <property type="entry name" value="Glycosyl_transferase_4"/>
</dbReference>
<dbReference type="InterPro" id="IPR003524">
    <property type="entry name" value="PNAcMuramoyl-5peptid_Trfase"/>
</dbReference>
<dbReference type="InterPro" id="IPR018480">
    <property type="entry name" value="PNAcMuramoyl-5peptid_Trfase_CS"/>
</dbReference>
<dbReference type="NCBIfam" id="TIGR00445">
    <property type="entry name" value="mraY"/>
    <property type="match status" value="1"/>
</dbReference>
<dbReference type="PANTHER" id="PTHR22926">
    <property type="entry name" value="PHOSPHO-N-ACETYLMURAMOYL-PENTAPEPTIDE-TRANSFERASE"/>
    <property type="match status" value="1"/>
</dbReference>
<dbReference type="PANTHER" id="PTHR22926:SF5">
    <property type="entry name" value="PHOSPHO-N-ACETYLMURAMOYL-PENTAPEPTIDE-TRANSFERASE HOMOLOG"/>
    <property type="match status" value="1"/>
</dbReference>
<dbReference type="Pfam" id="PF00953">
    <property type="entry name" value="Glycos_transf_4"/>
    <property type="match status" value="1"/>
</dbReference>
<dbReference type="Pfam" id="PF10555">
    <property type="entry name" value="MraY_sig1"/>
    <property type="match status" value="1"/>
</dbReference>
<dbReference type="PROSITE" id="PS01348">
    <property type="entry name" value="MRAY_2"/>
    <property type="match status" value="1"/>
</dbReference>
<protein>
    <recommendedName>
        <fullName evidence="1">Phospho-N-acetylmuramoyl-pentapeptide-transferase</fullName>
        <ecNumber evidence="1">2.7.8.13</ecNumber>
    </recommendedName>
    <alternativeName>
        <fullName evidence="1">UDP-MurNAc-pentapeptide phosphotransferase</fullName>
    </alternativeName>
</protein>
<sequence>MLYHLLYPLHEQFSVLYIFRYITFRAIYATITALMIAFILGPWLIDKLSRLQIGQSIRKDGPQSHFKKEGTPTMGGTLILLAIVLPTLLWTDLTNVYVWVTLLVTVGFGAVGFVDDYRKVKLRNSAGLSARQKMLWLMLIAGTAGVMLYSYPPFQTTLAFPFFKGLRPELGLFYIPFAVLVIVGASNAVNLTDGLDGLAIGPTIIASGTYLLFAYLAGNARLAEYLQISSVQGAGELAVLCGAMVGAGLGFLWFNTYPAQVFMGDVGSLSLGGALGTIAVITKQEIVLVIVGGIFVVEALSVIVQVSSFKLLGKRIFRMAPIHHHFELKGWAEPKIIVRFWIISIILALVALSTLKLR</sequence>
<feature type="chain" id="PRO_0000235464" description="Phospho-N-acetylmuramoyl-pentapeptide-transferase">
    <location>
        <begin position="1"/>
        <end position="358"/>
    </location>
</feature>
<feature type="transmembrane region" description="Helical" evidence="1">
    <location>
        <begin position="26"/>
        <end position="46"/>
    </location>
</feature>
<feature type="transmembrane region" description="Helical" evidence="1">
    <location>
        <begin position="70"/>
        <end position="90"/>
    </location>
</feature>
<feature type="transmembrane region" description="Helical" evidence="1">
    <location>
        <begin position="94"/>
        <end position="114"/>
    </location>
</feature>
<feature type="transmembrane region" description="Helical" evidence="1">
    <location>
        <begin position="134"/>
        <end position="154"/>
    </location>
</feature>
<feature type="transmembrane region" description="Helical" evidence="1">
    <location>
        <begin position="169"/>
        <end position="189"/>
    </location>
</feature>
<feature type="transmembrane region" description="Helical" evidence="1">
    <location>
        <begin position="197"/>
        <end position="217"/>
    </location>
</feature>
<feature type="transmembrane region" description="Helical" evidence="1">
    <location>
        <begin position="234"/>
        <end position="254"/>
    </location>
</feature>
<feature type="transmembrane region" description="Helical" evidence="1">
    <location>
        <begin position="261"/>
        <end position="281"/>
    </location>
</feature>
<feature type="transmembrane region" description="Helical" evidence="1">
    <location>
        <begin position="286"/>
        <end position="306"/>
    </location>
</feature>
<feature type="transmembrane region" description="Helical" evidence="1">
    <location>
        <begin position="335"/>
        <end position="355"/>
    </location>
</feature>
<name>MRAY_SYNC1</name>